<feature type="chain" id="PRO_0000142697" description="Phosphoprotein">
    <location>
        <begin position="1"/>
        <end position="395"/>
    </location>
</feature>
<feature type="region of interest" description="Disordered" evidence="4">
    <location>
        <begin position="29"/>
        <end position="104"/>
    </location>
</feature>
<feature type="region of interest" description="Disordered" evidence="4">
    <location>
        <begin position="129"/>
        <end position="214"/>
    </location>
</feature>
<feature type="region of interest" description="Multimerization" evidence="3">
    <location>
        <begin position="222"/>
        <end position="285"/>
    </location>
</feature>
<feature type="compositionally biased region" description="Basic and acidic residues" evidence="4">
    <location>
        <begin position="65"/>
        <end position="74"/>
    </location>
</feature>
<feature type="compositionally biased region" description="Polar residues" evidence="4">
    <location>
        <begin position="89"/>
        <end position="101"/>
    </location>
</feature>
<feature type="compositionally biased region" description="Polar residues" evidence="4">
    <location>
        <begin position="129"/>
        <end position="180"/>
    </location>
</feature>
<feature type="compositionally biased region" description="Polar residues" evidence="4">
    <location>
        <begin position="203"/>
        <end position="212"/>
    </location>
</feature>
<sequence length="395" mass="42241">MATFTDAEIDELFETSGTVIDNIITAQGKSAETVGRSAIPHGKTKALSAAWEKHGSIQPPASQDTPDRQDRSDKQPSTPEQATPHDSPPATSADQPPTQATDEAVDTQLRTGASNSLLLMLDKLSNKSSNAKKGLWSSPQEGNHQRPTQQQGSQPSRGNSQERPQNQVKAAPGNQGTDANTAYHGQWEESQLSAGATPHALRSRQSQDNTLVSADHVQPPVDFVQAMMSMMEAISQRVSKVDYQLDLVLKQTSSIPMMRSEIQQLKTSVAVMEANLGMMKILDPGCANVSSLSDLRAVARSHPVLVSGPGDPSPYVTQGGEMALNKLSQPVPHPSELIKSATACGPDIGVEKDTVRALIMSRPMHPSSSAKLLSKLDAAGSIEEIRKIKRLALNG</sequence>
<reference key="1">
    <citation type="journal article" date="1992" name="Nucleic Acids Res.">
        <title>Nucleotide sequence of the phosphoprotein (P) gene of Newcastle disease virus (strain Beaudette C).</title>
        <authorList>
            <person name="Daskalakis S."/>
            <person name="Menke J.B."/>
            <person name="Stripp B.R."/>
            <person name="Stone H.O."/>
        </authorList>
    </citation>
    <scope>NUCLEOTIDE SEQUENCE [MRNA]</scope>
</reference>
<accession>P24698</accession>
<organismHost>
    <name type="scientific">Gallus gallus</name>
    <name type="common">Chicken</name>
    <dbReference type="NCBI Taxonomy" id="9031"/>
</organismHost>
<organism>
    <name type="scientific">Newcastle disease virus (strain Beaudette C/45)</name>
    <name type="common">NDV</name>
    <dbReference type="NCBI Taxonomy" id="11178"/>
    <lineage>
        <taxon>Viruses</taxon>
        <taxon>Riboviria</taxon>
        <taxon>Orthornavirae</taxon>
        <taxon>Negarnaviricota</taxon>
        <taxon>Haploviricotina</taxon>
        <taxon>Monjiviricetes</taxon>
        <taxon>Mononegavirales</taxon>
        <taxon>Paramyxoviridae</taxon>
        <taxon>Avulavirinae</taxon>
        <taxon>Orthoavulavirus</taxon>
        <taxon>Orthoavulavirus javaense</taxon>
        <taxon>Avian paramyxovirus 1</taxon>
    </lineage>
</organism>
<name>PHOSP_NDVB</name>
<comment type="function">
    <text evidence="2 3">Essential cofactor of the RNA polymerase L that plays a central role in the transcription and replication by forming the polymerase complex with RNA polymerase L and recruiting L to the genomic N-RNA template for RNA synthesis (By similarity). Also plays a central role in the encapsidation of nascent RNA chains by forming the encapsidation complex with the nucleocapsid protein N (N-P complex). Acts as a chaperone for newly synthesized free N protein, so-called N0, allowing encapsidation of nascent RNA chains during replication (By similarity). The nucleoprotein protein N prevents excessive phosphorylation of P, which leads to down-regulation of viral transcription/ replication. Participates, together with N, in the formation of viral factories (viroplasms), which are large inclusions in the host cytoplasm where replication takes place (By similarity).</text>
</comment>
<comment type="subunit">
    <text evidence="2 3">Homotetramer. Interacts (via multimerization domain) with polymerase L; this interaction forms the polymerase L-P complex (By similarity). Interacts (via N-terminus) with N0 (via Ncore); this interaction allows P to chaperon N0 to avoid N polymerization before encapsidation. Interacts (via C-terminus) with N-RNA template; this interaction positions the polymerase on the template for both transcription and replication (By similarity).</text>
</comment>
<comment type="domain">
    <text evidence="1 2 3">The N-terminus consists of a long intrinsically disordered tail. The central part contains the coiled-coil multimerization domain (PMD) (By similarity). Forms a four-stranded coiled coil structure (By similarity). The C-terminus constitutes the alpha-helical domain that binds to the nucleocapsid (N-RNA complex) (By similarity).</text>
</comment>
<comment type="similarity">
    <text evidence="5">Belongs to the rubulavirus/avulavirus P protein family.</text>
</comment>
<protein>
    <recommendedName>
        <fullName>Phosphoprotein</fullName>
        <shortName>Protein P</shortName>
    </recommendedName>
</protein>
<dbReference type="EMBL" id="X60599">
    <property type="protein sequence ID" value="CAA43054.1"/>
    <property type="molecule type" value="mRNA"/>
</dbReference>
<dbReference type="PIR" id="S22827">
    <property type="entry name" value="S22827"/>
</dbReference>
<dbReference type="SMR" id="P24698"/>
<dbReference type="GO" id="GO:0039697">
    <property type="term" value="P:negative stranded viral RNA transcription"/>
    <property type="evidence" value="ECO:0000314"/>
    <property type="project" value="UniProtKB"/>
</dbReference>
<dbReference type="CDD" id="cd21031">
    <property type="entry name" value="MEV_P-protein-C_like"/>
    <property type="match status" value="1"/>
</dbReference>
<dbReference type="FunFam" id="1.20.5.300:FF:000007">
    <property type="entry name" value="Phosphoprotein"/>
    <property type="match status" value="1"/>
</dbReference>
<dbReference type="Gene3D" id="1.20.5.300">
    <property type="match status" value="1"/>
</dbReference>
<dbReference type="InterPro" id="IPR004897">
    <property type="entry name" value="P/V_Pprotein_paramyxoviral"/>
</dbReference>
<dbReference type="InterPro" id="IPR025909">
    <property type="entry name" value="Soyouz_module"/>
</dbReference>
<dbReference type="Pfam" id="PF03210">
    <property type="entry name" value="Paramyx_P_V_C"/>
    <property type="match status" value="1"/>
</dbReference>
<dbReference type="Pfam" id="PF14313">
    <property type="entry name" value="Soyouz_module"/>
    <property type="match status" value="1"/>
</dbReference>
<gene>
    <name type="primary">P</name>
</gene>
<evidence type="ECO:0000250" key="1">
    <source>
        <dbReference type="UniProtKB" id="P04859"/>
    </source>
</evidence>
<evidence type="ECO:0000250" key="2">
    <source>
        <dbReference type="UniProtKB" id="P06162"/>
    </source>
</evidence>
<evidence type="ECO:0000250" key="3">
    <source>
        <dbReference type="UniProtKB" id="Q77M42"/>
    </source>
</evidence>
<evidence type="ECO:0000256" key="4">
    <source>
        <dbReference type="SAM" id="MobiDB-lite"/>
    </source>
</evidence>
<evidence type="ECO:0000305" key="5"/>
<proteinExistence type="evidence at transcript level"/>
<keyword id="KW-0597">Phosphoprotein</keyword>
<keyword id="KW-0693">Viral RNA replication</keyword>